<gene>
    <name evidence="1" type="primary">tpiA</name>
    <name type="ordered locus">SCH_3970</name>
</gene>
<dbReference type="EC" id="5.3.1.1" evidence="1"/>
<dbReference type="EMBL" id="AE017220">
    <property type="protein sequence ID" value="AAX67876.1"/>
    <property type="molecule type" value="Genomic_DNA"/>
</dbReference>
<dbReference type="RefSeq" id="WP_001216339.1">
    <property type="nucleotide sequence ID" value="NC_006905.1"/>
</dbReference>
<dbReference type="SMR" id="Q57HD6"/>
<dbReference type="KEGG" id="sec:SCH_3970"/>
<dbReference type="HOGENOM" id="CLU_024251_2_1_6"/>
<dbReference type="UniPathway" id="UPA00109">
    <property type="reaction ID" value="UER00189"/>
</dbReference>
<dbReference type="UniPathway" id="UPA00138"/>
<dbReference type="Proteomes" id="UP000000538">
    <property type="component" value="Chromosome"/>
</dbReference>
<dbReference type="GO" id="GO:0005829">
    <property type="term" value="C:cytosol"/>
    <property type="evidence" value="ECO:0007669"/>
    <property type="project" value="TreeGrafter"/>
</dbReference>
<dbReference type="GO" id="GO:0004807">
    <property type="term" value="F:triose-phosphate isomerase activity"/>
    <property type="evidence" value="ECO:0007669"/>
    <property type="project" value="UniProtKB-UniRule"/>
</dbReference>
<dbReference type="GO" id="GO:0006094">
    <property type="term" value="P:gluconeogenesis"/>
    <property type="evidence" value="ECO:0007669"/>
    <property type="project" value="UniProtKB-UniRule"/>
</dbReference>
<dbReference type="GO" id="GO:0046166">
    <property type="term" value="P:glyceraldehyde-3-phosphate biosynthetic process"/>
    <property type="evidence" value="ECO:0007669"/>
    <property type="project" value="TreeGrafter"/>
</dbReference>
<dbReference type="GO" id="GO:0019563">
    <property type="term" value="P:glycerol catabolic process"/>
    <property type="evidence" value="ECO:0007669"/>
    <property type="project" value="TreeGrafter"/>
</dbReference>
<dbReference type="GO" id="GO:0006096">
    <property type="term" value="P:glycolytic process"/>
    <property type="evidence" value="ECO:0007669"/>
    <property type="project" value="UniProtKB-UniRule"/>
</dbReference>
<dbReference type="CDD" id="cd00311">
    <property type="entry name" value="TIM"/>
    <property type="match status" value="1"/>
</dbReference>
<dbReference type="FunFam" id="3.20.20.70:FF:000020">
    <property type="entry name" value="Triosephosphate isomerase"/>
    <property type="match status" value="1"/>
</dbReference>
<dbReference type="Gene3D" id="3.20.20.70">
    <property type="entry name" value="Aldolase class I"/>
    <property type="match status" value="1"/>
</dbReference>
<dbReference type="HAMAP" id="MF_00147_B">
    <property type="entry name" value="TIM_B"/>
    <property type="match status" value="1"/>
</dbReference>
<dbReference type="InterPro" id="IPR013785">
    <property type="entry name" value="Aldolase_TIM"/>
</dbReference>
<dbReference type="InterPro" id="IPR035990">
    <property type="entry name" value="TIM_sf"/>
</dbReference>
<dbReference type="InterPro" id="IPR022896">
    <property type="entry name" value="TrioseP_Isoase_bac/euk"/>
</dbReference>
<dbReference type="InterPro" id="IPR000652">
    <property type="entry name" value="Triosephosphate_isomerase"/>
</dbReference>
<dbReference type="InterPro" id="IPR020861">
    <property type="entry name" value="Triosephosphate_isomerase_AS"/>
</dbReference>
<dbReference type="NCBIfam" id="TIGR00419">
    <property type="entry name" value="tim"/>
    <property type="match status" value="1"/>
</dbReference>
<dbReference type="PANTHER" id="PTHR21139">
    <property type="entry name" value="TRIOSEPHOSPHATE ISOMERASE"/>
    <property type="match status" value="1"/>
</dbReference>
<dbReference type="PANTHER" id="PTHR21139:SF42">
    <property type="entry name" value="TRIOSEPHOSPHATE ISOMERASE"/>
    <property type="match status" value="1"/>
</dbReference>
<dbReference type="Pfam" id="PF00121">
    <property type="entry name" value="TIM"/>
    <property type="match status" value="1"/>
</dbReference>
<dbReference type="SUPFAM" id="SSF51351">
    <property type="entry name" value="Triosephosphate isomerase (TIM)"/>
    <property type="match status" value="1"/>
</dbReference>
<dbReference type="PROSITE" id="PS00171">
    <property type="entry name" value="TIM_1"/>
    <property type="match status" value="1"/>
</dbReference>
<dbReference type="PROSITE" id="PS51440">
    <property type="entry name" value="TIM_2"/>
    <property type="match status" value="1"/>
</dbReference>
<protein>
    <recommendedName>
        <fullName evidence="1">Triosephosphate isomerase</fullName>
        <shortName evidence="1">TIM</shortName>
        <shortName evidence="1">TPI</shortName>
        <ecNumber evidence="1">5.3.1.1</ecNumber>
    </recommendedName>
    <alternativeName>
        <fullName evidence="1">Triose-phosphate isomerase</fullName>
    </alternativeName>
</protein>
<keyword id="KW-0963">Cytoplasm</keyword>
<keyword id="KW-0312">Gluconeogenesis</keyword>
<keyword id="KW-0324">Glycolysis</keyword>
<keyword id="KW-0413">Isomerase</keyword>
<proteinExistence type="inferred from homology"/>
<reference key="1">
    <citation type="journal article" date="2005" name="Nucleic Acids Res.">
        <title>The genome sequence of Salmonella enterica serovar Choleraesuis, a highly invasive and resistant zoonotic pathogen.</title>
        <authorList>
            <person name="Chiu C.-H."/>
            <person name="Tang P."/>
            <person name="Chu C."/>
            <person name="Hu S."/>
            <person name="Bao Q."/>
            <person name="Yu J."/>
            <person name="Chou Y.-Y."/>
            <person name="Wang H.-S."/>
            <person name="Lee Y.-S."/>
        </authorList>
    </citation>
    <scope>NUCLEOTIDE SEQUENCE [LARGE SCALE GENOMIC DNA]</scope>
    <source>
        <strain>SC-B67</strain>
    </source>
</reference>
<sequence length="255" mass="26917">MRHPLVMGNWKLNGSRHMVNELVANLRKELTGVAGCDVAIAPPEMYIDLAKRAAAGSHIMLGAQNVDLNLSGAFTGETSAEMLKDIGAQYIIIGHSERRTYHKESDELIAKKFAVLKEQGLTPVLCIGETEAENEAGKTEEVCARQIDAVLKTQGAAAFEGAVIAYEPVWAIGTGKSATPAQAQAVHKFIRDHIAKADAKIAEQVIIQYGGSVNASNAAELFAQPDIDGALVGGASLKADAFAVIVKAAEAAKQA</sequence>
<accession>Q57HD6</accession>
<organism>
    <name type="scientific">Salmonella choleraesuis (strain SC-B67)</name>
    <dbReference type="NCBI Taxonomy" id="321314"/>
    <lineage>
        <taxon>Bacteria</taxon>
        <taxon>Pseudomonadati</taxon>
        <taxon>Pseudomonadota</taxon>
        <taxon>Gammaproteobacteria</taxon>
        <taxon>Enterobacterales</taxon>
        <taxon>Enterobacteriaceae</taxon>
        <taxon>Salmonella</taxon>
    </lineage>
</organism>
<evidence type="ECO:0000255" key="1">
    <source>
        <dbReference type="HAMAP-Rule" id="MF_00147"/>
    </source>
</evidence>
<feature type="chain" id="PRO_0000307550" description="Triosephosphate isomerase">
    <location>
        <begin position="1"/>
        <end position="255"/>
    </location>
</feature>
<feature type="active site" description="Electrophile" evidence="1">
    <location>
        <position position="95"/>
    </location>
</feature>
<feature type="active site" description="Proton acceptor" evidence="1">
    <location>
        <position position="167"/>
    </location>
</feature>
<feature type="binding site" evidence="1">
    <location>
        <begin position="9"/>
        <end position="11"/>
    </location>
    <ligand>
        <name>substrate</name>
    </ligand>
</feature>
<feature type="binding site" evidence="1">
    <location>
        <position position="173"/>
    </location>
    <ligand>
        <name>substrate</name>
    </ligand>
</feature>
<feature type="binding site" evidence="1">
    <location>
        <position position="212"/>
    </location>
    <ligand>
        <name>substrate</name>
    </ligand>
</feature>
<feature type="binding site" evidence="1">
    <location>
        <begin position="233"/>
        <end position="234"/>
    </location>
    <ligand>
        <name>substrate</name>
    </ligand>
</feature>
<comment type="function">
    <text evidence="1">Involved in the gluconeogenesis. Catalyzes stereospecifically the conversion of dihydroxyacetone phosphate (DHAP) to D-glyceraldehyde-3-phosphate (G3P).</text>
</comment>
<comment type="catalytic activity">
    <reaction evidence="1">
        <text>D-glyceraldehyde 3-phosphate = dihydroxyacetone phosphate</text>
        <dbReference type="Rhea" id="RHEA:18585"/>
        <dbReference type="ChEBI" id="CHEBI:57642"/>
        <dbReference type="ChEBI" id="CHEBI:59776"/>
        <dbReference type="EC" id="5.3.1.1"/>
    </reaction>
</comment>
<comment type="pathway">
    <text evidence="1">Carbohydrate biosynthesis; gluconeogenesis.</text>
</comment>
<comment type="pathway">
    <text evidence="1">Carbohydrate degradation; glycolysis; D-glyceraldehyde 3-phosphate from glycerone phosphate: step 1/1.</text>
</comment>
<comment type="subunit">
    <text evidence="1">Homodimer.</text>
</comment>
<comment type="subcellular location">
    <subcellularLocation>
        <location evidence="1">Cytoplasm</location>
    </subcellularLocation>
</comment>
<comment type="similarity">
    <text evidence="1">Belongs to the triosephosphate isomerase family.</text>
</comment>
<name>TPIS_SALCH</name>